<sequence length="398" mass="46628">MSEEDDHWNLVRLRRLRKGREGEEQSSKSEISLDSLHESSFAGEDDEDFDADVLSNTSSEESAQMNRIYDFRTSNEFSNAGVNIDQTGVPTISESFDTLSGSNVGGTVLPSMEGSKLKDSTIRNSSTLSDHIIDKSEGKSAKLKMWHVIMLSSLLSMTFSYLALEYSLTGDVLAGFKSQQSLRNNERKLLYGNIDFVDKKSYDSSSDSLSQWAPSGKYYVDFDNHIAYPLKDDDLMGWRRYKTDLVILWYTTKARMKDGWHKRINKINGGRIKLHLFLKNSFKSAQESLRVLHKEQKRRWKRLFVLLHNKYRQFSPHIKRYFDHSCQKAKQCWSGSRLQLRKLRFKSMKPFRVFQFKVRKDTNWFVKQLKRFGLKLQHSRMYKAMSECRKKNYFKCKH</sequence>
<proteinExistence type="evidence at protein level"/>
<keyword id="KW-0072">Autophagy</keyword>
<keyword id="KW-0256">Endoplasmic reticulum</keyword>
<keyword id="KW-0472">Membrane</keyword>
<keyword id="KW-1185">Reference proteome</keyword>
<keyword id="KW-0812">Transmembrane</keyword>
<keyword id="KW-1133">Transmembrane helix</keyword>
<protein>
    <recommendedName>
        <fullName evidence="4">Autophagy-related protein 39</fullName>
    </recommendedName>
</protein>
<dbReference type="EMBL" id="U20618">
    <property type="protein sequence ID" value="AAB64517.1"/>
    <property type="molecule type" value="Genomic_DNA"/>
</dbReference>
<dbReference type="EMBL" id="BK006945">
    <property type="protein sequence ID" value="DAA09621.1"/>
    <property type="molecule type" value="Genomic_DNA"/>
</dbReference>
<dbReference type="PIR" id="S53391">
    <property type="entry name" value="S53391"/>
</dbReference>
<dbReference type="RefSeq" id="NP_013415.1">
    <property type="nucleotide sequence ID" value="NM_001182200.1"/>
</dbReference>
<dbReference type="BioGRID" id="31576">
    <property type="interactions" value="105"/>
</dbReference>
<dbReference type="DIP" id="DIP-1453N"/>
<dbReference type="FunCoup" id="Q06159">
    <property type="interactions" value="80"/>
</dbReference>
<dbReference type="IntAct" id="Q06159">
    <property type="interactions" value="3"/>
</dbReference>
<dbReference type="MINT" id="Q06159"/>
<dbReference type="STRING" id="4932.YLR312C"/>
<dbReference type="TCDB" id="1.I.1.1.1">
    <property type="family name" value="the nuclear pore complex (npc) family"/>
</dbReference>
<dbReference type="iPTMnet" id="Q06159"/>
<dbReference type="PaxDb" id="4932-YLR312C"/>
<dbReference type="PeptideAtlas" id="Q06159"/>
<dbReference type="EnsemblFungi" id="YLR312C_mRNA">
    <property type="protein sequence ID" value="YLR312C"/>
    <property type="gene ID" value="YLR312C"/>
</dbReference>
<dbReference type="GeneID" id="851021"/>
<dbReference type="KEGG" id="sce:YLR312C"/>
<dbReference type="AGR" id="SGD:S000004303"/>
<dbReference type="SGD" id="S000004303">
    <property type="gene designation" value="ATG39"/>
</dbReference>
<dbReference type="VEuPathDB" id="FungiDB:YLR312C"/>
<dbReference type="eggNOG" id="ENOG502S3QX">
    <property type="taxonomic scope" value="Eukaryota"/>
</dbReference>
<dbReference type="HOGENOM" id="CLU_683620_0_0_1"/>
<dbReference type="InParanoid" id="Q06159"/>
<dbReference type="OMA" id="HIIDKSE"/>
<dbReference type="OrthoDB" id="4059607at2759"/>
<dbReference type="BioCyc" id="YEAST:G3O-32397-MONOMER"/>
<dbReference type="BioGRID-ORCS" id="851021">
    <property type="hits" value="2 hits in 10 CRISPR screens"/>
</dbReference>
<dbReference type="PRO" id="PR:Q06159"/>
<dbReference type="Proteomes" id="UP000002311">
    <property type="component" value="Chromosome XII"/>
</dbReference>
<dbReference type="RNAct" id="Q06159">
    <property type="molecule type" value="protein"/>
</dbReference>
<dbReference type="GO" id="GO:0005789">
    <property type="term" value="C:endoplasmic reticulum membrane"/>
    <property type="evidence" value="ECO:0007669"/>
    <property type="project" value="UniProtKB-SubCell"/>
</dbReference>
<dbReference type="GO" id="GO:0005640">
    <property type="term" value="C:nuclear outer membrane"/>
    <property type="evidence" value="ECO:0000314"/>
    <property type="project" value="SGD"/>
</dbReference>
<dbReference type="GO" id="GO:0097038">
    <property type="term" value="C:perinuclear endoplasmic reticulum"/>
    <property type="evidence" value="ECO:0000314"/>
    <property type="project" value="SGD"/>
</dbReference>
<dbReference type="GO" id="GO:0034045">
    <property type="term" value="C:phagophore assembly site membrane"/>
    <property type="evidence" value="ECO:0007669"/>
    <property type="project" value="UniProtKB-SubCell"/>
</dbReference>
<dbReference type="GO" id="GO:0030674">
    <property type="term" value="F:protein-macromolecule adaptor activity"/>
    <property type="evidence" value="ECO:0000315"/>
    <property type="project" value="SGD"/>
</dbReference>
<dbReference type="GO" id="GO:0006995">
    <property type="term" value="P:cellular response to nitrogen starvation"/>
    <property type="evidence" value="ECO:0000315"/>
    <property type="project" value="SGD"/>
</dbReference>
<dbReference type="GO" id="GO:0044804">
    <property type="term" value="P:nucleophagy"/>
    <property type="evidence" value="ECO:0000315"/>
    <property type="project" value="SGD"/>
</dbReference>
<dbReference type="GO" id="GO:0061709">
    <property type="term" value="P:reticulophagy"/>
    <property type="evidence" value="ECO:0000315"/>
    <property type="project" value="SGD"/>
</dbReference>
<reference key="1">
    <citation type="journal article" date="1997" name="Nature">
        <title>The nucleotide sequence of Saccharomyces cerevisiae chromosome XII.</title>
        <authorList>
            <person name="Johnston M."/>
            <person name="Hillier L.W."/>
            <person name="Riles L."/>
            <person name="Albermann K."/>
            <person name="Andre B."/>
            <person name="Ansorge W."/>
            <person name="Benes V."/>
            <person name="Brueckner M."/>
            <person name="Delius H."/>
            <person name="Dubois E."/>
            <person name="Duesterhoeft A."/>
            <person name="Entian K.-D."/>
            <person name="Floeth M."/>
            <person name="Goffeau A."/>
            <person name="Hebling U."/>
            <person name="Heumann K."/>
            <person name="Heuss-Neitzel D."/>
            <person name="Hilbert H."/>
            <person name="Hilger F."/>
            <person name="Kleine K."/>
            <person name="Koetter P."/>
            <person name="Louis E.J."/>
            <person name="Messenguy F."/>
            <person name="Mewes H.-W."/>
            <person name="Miosga T."/>
            <person name="Moestl D."/>
            <person name="Mueller-Auer S."/>
            <person name="Nentwich U."/>
            <person name="Obermaier B."/>
            <person name="Piravandi E."/>
            <person name="Pohl T.M."/>
            <person name="Portetelle D."/>
            <person name="Purnelle B."/>
            <person name="Rechmann S."/>
            <person name="Rieger M."/>
            <person name="Rinke M."/>
            <person name="Rose M."/>
            <person name="Scharfe M."/>
            <person name="Scherens B."/>
            <person name="Scholler P."/>
            <person name="Schwager C."/>
            <person name="Schwarz S."/>
            <person name="Underwood A.P."/>
            <person name="Urrestarazu L.A."/>
            <person name="Vandenbol M."/>
            <person name="Verhasselt P."/>
            <person name="Vierendeels F."/>
            <person name="Voet M."/>
            <person name="Volckaert G."/>
            <person name="Voss H."/>
            <person name="Wambutt R."/>
            <person name="Wedler E."/>
            <person name="Wedler H."/>
            <person name="Zimmermann F.K."/>
            <person name="Zollner A."/>
            <person name="Hani J."/>
            <person name="Hoheisel J.D."/>
        </authorList>
    </citation>
    <scope>NUCLEOTIDE SEQUENCE [LARGE SCALE GENOMIC DNA]</scope>
    <source>
        <strain>ATCC 204508 / S288c</strain>
    </source>
</reference>
<reference key="2">
    <citation type="journal article" date="2014" name="G3 (Bethesda)">
        <title>The reference genome sequence of Saccharomyces cerevisiae: Then and now.</title>
        <authorList>
            <person name="Engel S.R."/>
            <person name="Dietrich F.S."/>
            <person name="Fisk D.G."/>
            <person name="Binkley G."/>
            <person name="Balakrishnan R."/>
            <person name="Costanzo M.C."/>
            <person name="Dwight S.S."/>
            <person name="Hitz B.C."/>
            <person name="Karra K."/>
            <person name="Nash R.S."/>
            <person name="Weng S."/>
            <person name="Wong E.D."/>
            <person name="Lloyd P."/>
            <person name="Skrzypek M.S."/>
            <person name="Miyasato S.R."/>
            <person name="Simison M."/>
            <person name="Cherry J.M."/>
        </authorList>
    </citation>
    <scope>GENOME REANNOTATION</scope>
    <source>
        <strain>ATCC 204508 / S288c</strain>
    </source>
</reference>
<reference key="3">
    <citation type="journal article" date="2015" name="Nature">
        <title>Receptor-mediated selective autophagy degrades the endoplasmic reticulum and the nucleus.</title>
        <authorList>
            <person name="Mochida K."/>
            <person name="Oikawa Y."/>
            <person name="Kimura Y."/>
            <person name="Kirisako H."/>
            <person name="Hirano H."/>
            <person name="Ohsumi Y."/>
            <person name="Nakatogawa H."/>
        </authorList>
    </citation>
    <scope>INTERACTION WITH ATG8 AND ATG11</scope>
    <scope>INDUCTION</scope>
    <scope>DISRUPTION PHENOTYPE</scope>
    <scope>SUBCELLULAR LOCATION</scope>
    <scope>FUNCTION</scope>
    <scope>MUTAGENESIS OF 52-ASP--SER-59</scope>
</reference>
<accession>Q06159</accession>
<accession>D6VYV5</accession>
<comment type="function">
    <text evidence="3">Acts as a receptor for reticulophagy and nucleophagy. Directs autophagic sequestration of double-membrane vesicles derived from the nuclear envelope and perinuclear endoplasmic reticulum (pnER) into autophagosomes. Is not required for the cytoplasm-to-vacuole targeting pathway, mitophagy, pexophagy, and non-selective autophagy.</text>
</comment>
<comment type="subunit">
    <text evidence="3">Interacts with ATG8 and ATG11.</text>
</comment>
<comment type="interaction">
    <interactant intactId="EBI-33888">
        <id>Q06159</id>
    </interactant>
    <interactant intactId="EBI-31977">
        <id>Q12527</id>
        <label>ATG11</label>
    </interactant>
    <organismsDiffer>false</organismsDiffer>
    <experiments>2</experiments>
</comment>
<comment type="interaction">
    <interactant intactId="EBI-33888">
        <id>Q06159</id>
    </interactant>
    <interactant intactId="EBI-2684">
        <id>P38182</id>
        <label>ATG8</label>
    </interactant>
    <organismsDiffer>false</organismsDiffer>
    <experiments>3</experiments>
</comment>
<comment type="subcellular location">
    <subcellularLocation>
        <location evidence="3">Endoplasmic reticulum membrane</location>
        <topology evidence="1">Single-pass membrane protein</topology>
    </subcellularLocation>
    <subcellularLocation>
        <location evidence="3">Preautophagosomal structure membrane</location>
        <topology evidence="1">Single-pass membrane protein</topology>
    </subcellularLocation>
</comment>
<comment type="induction">
    <text evidence="3">Expression is increased by rapamycin, which mimics nitrogen starvation by inactivating the TORC1 complex.</text>
</comment>
<comment type="disruption phenotype">
    <text evidence="3">Partially blocks reticulophagy, and the double ATG39/ATG40 knockout almost completely blocks this pathway. Leads to abnormal morphology in the nucleus/pnER, when exposed to prolonged nitrogen starvation.</text>
</comment>
<feature type="chain" id="PRO_0000268627" description="Autophagy-related protein 39">
    <location>
        <begin position="1"/>
        <end position="398"/>
    </location>
</feature>
<feature type="transmembrane region" description="Helical" evidence="1">
    <location>
        <begin position="148"/>
        <end position="164"/>
    </location>
</feature>
<feature type="region of interest" description="Disordered" evidence="2">
    <location>
        <begin position="15"/>
        <end position="50"/>
    </location>
</feature>
<feature type="short sequence motif" description="ATG8-binding" evidence="5">
    <location>
        <begin position="8"/>
        <end position="11"/>
    </location>
</feature>
<feature type="short sequence motif" description="ATG11-binding" evidence="5">
    <location>
        <begin position="52"/>
        <end position="59"/>
    </location>
</feature>
<feature type="mutagenesis site" description="Impairs interaction with ATG8 and decreases subsequent reticulophagy." evidence="3">
    <original>DVLSNTSS</original>
    <variation>AAAAAAAAA</variation>
    <location>
        <begin position="52"/>
        <end position="59"/>
    </location>
</feature>
<name>ATG39_YEAST</name>
<gene>
    <name evidence="4" type="primary">ATG39</name>
    <name evidence="6" type="ordered locus">YLR312C</name>
</gene>
<organism>
    <name type="scientific">Saccharomyces cerevisiae (strain ATCC 204508 / S288c)</name>
    <name type="common">Baker's yeast</name>
    <dbReference type="NCBI Taxonomy" id="559292"/>
    <lineage>
        <taxon>Eukaryota</taxon>
        <taxon>Fungi</taxon>
        <taxon>Dikarya</taxon>
        <taxon>Ascomycota</taxon>
        <taxon>Saccharomycotina</taxon>
        <taxon>Saccharomycetes</taxon>
        <taxon>Saccharomycetales</taxon>
        <taxon>Saccharomycetaceae</taxon>
        <taxon>Saccharomyces</taxon>
    </lineage>
</organism>
<evidence type="ECO:0000255" key="1"/>
<evidence type="ECO:0000256" key="2">
    <source>
        <dbReference type="SAM" id="MobiDB-lite"/>
    </source>
</evidence>
<evidence type="ECO:0000269" key="3">
    <source>
    </source>
</evidence>
<evidence type="ECO:0000303" key="4">
    <source>
    </source>
</evidence>
<evidence type="ECO:0000305" key="5">
    <source>
    </source>
</evidence>
<evidence type="ECO:0000312" key="6">
    <source>
        <dbReference type="SGD" id="S000004303"/>
    </source>
</evidence>